<comment type="function">
    <text evidence="1">Converts O-phospho-L-seryl-tRNA(Cys) (Sep-tRNA(Cys)) to L-cysteinyl-tRNA(Cys) (Cys-tRNA(Cys)).</text>
</comment>
<comment type="catalytic activity">
    <reaction evidence="1">
        <text>O-phospho-L-seryl-tRNA(Cys) + hydrogen sulfide + H(+) = L-cysteinyl-tRNA(Cys) + phosphate</text>
        <dbReference type="Rhea" id="RHEA:25686"/>
        <dbReference type="Rhea" id="RHEA-COMP:9679"/>
        <dbReference type="Rhea" id="RHEA-COMP:9719"/>
        <dbReference type="ChEBI" id="CHEBI:15378"/>
        <dbReference type="ChEBI" id="CHEBI:29919"/>
        <dbReference type="ChEBI" id="CHEBI:43474"/>
        <dbReference type="ChEBI" id="CHEBI:78517"/>
        <dbReference type="ChEBI" id="CHEBI:78551"/>
        <dbReference type="EC" id="2.5.1.73"/>
    </reaction>
</comment>
<comment type="cofactor">
    <cofactor evidence="1">
        <name>pyridoxal 5'-phosphate</name>
        <dbReference type="ChEBI" id="CHEBI:597326"/>
    </cofactor>
</comment>
<comment type="subunit">
    <text evidence="1">Homodimer. Interacts with SepRS.</text>
</comment>
<comment type="similarity">
    <text evidence="1">Belongs to the SepCysS family.</text>
</comment>
<name>SPSS1_METBU</name>
<keyword id="KW-0648">Protein biosynthesis</keyword>
<keyword id="KW-0663">Pyridoxal phosphate</keyword>
<keyword id="KW-0808">Transferase</keyword>
<accession>Q12XS4</accession>
<dbReference type="EC" id="2.5.1.73" evidence="1"/>
<dbReference type="EMBL" id="CP000300">
    <property type="protein sequence ID" value="ABE51752.1"/>
    <property type="molecule type" value="Genomic_DNA"/>
</dbReference>
<dbReference type="RefSeq" id="WP_011498905.1">
    <property type="nucleotide sequence ID" value="NC_007955.1"/>
</dbReference>
<dbReference type="SMR" id="Q12XS4"/>
<dbReference type="STRING" id="259564.Mbur_0796"/>
<dbReference type="GeneID" id="3996701"/>
<dbReference type="KEGG" id="mbu:Mbur_0796"/>
<dbReference type="HOGENOM" id="CLU_060476_0_0_2"/>
<dbReference type="OrthoDB" id="5817at2157"/>
<dbReference type="Proteomes" id="UP000001979">
    <property type="component" value="Chromosome"/>
</dbReference>
<dbReference type="GO" id="GO:0043766">
    <property type="term" value="F:Sep-tRNA:Cys-tRNA synthase activity"/>
    <property type="evidence" value="ECO:0007669"/>
    <property type="project" value="UniProtKB-UniRule"/>
</dbReference>
<dbReference type="GO" id="GO:0006412">
    <property type="term" value="P:translation"/>
    <property type="evidence" value="ECO:0007669"/>
    <property type="project" value="UniProtKB-KW"/>
</dbReference>
<dbReference type="CDD" id="cd06452">
    <property type="entry name" value="SepCysS"/>
    <property type="match status" value="1"/>
</dbReference>
<dbReference type="Gene3D" id="3.90.1150.10">
    <property type="entry name" value="Aspartate Aminotransferase, domain 1"/>
    <property type="match status" value="1"/>
</dbReference>
<dbReference type="Gene3D" id="3.40.640.10">
    <property type="entry name" value="Type I PLP-dependent aspartate aminotransferase-like (Major domain)"/>
    <property type="match status" value="1"/>
</dbReference>
<dbReference type="HAMAP" id="MF_01675">
    <property type="entry name" value="Sep_Cys_tRNA_synth"/>
    <property type="match status" value="1"/>
</dbReference>
<dbReference type="InterPro" id="IPR015424">
    <property type="entry name" value="PyrdxlP-dep_Trfase"/>
</dbReference>
<dbReference type="InterPro" id="IPR015421">
    <property type="entry name" value="PyrdxlP-dep_Trfase_major"/>
</dbReference>
<dbReference type="InterPro" id="IPR015422">
    <property type="entry name" value="PyrdxlP-dep_Trfase_small"/>
</dbReference>
<dbReference type="InterPro" id="IPR013375">
    <property type="entry name" value="Sep_Cys-tRNA_synth_arc"/>
</dbReference>
<dbReference type="InterPro" id="IPR008829">
    <property type="entry name" value="SepSecS/SepCysS"/>
</dbReference>
<dbReference type="NCBIfam" id="NF006810">
    <property type="entry name" value="PRK09331.1"/>
    <property type="match status" value="1"/>
</dbReference>
<dbReference type="NCBIfam" id="TIGR02539">
    <property type="entry name" value="SepCysS"/>
    <property type="match status" value="1"/>
</dbReference>
<dbReference type="Pfam" id="PF05889">
    <property type="entry name" value="SepSecS"/>
    <property type="match status" value="1"/>
</dbReference>
<dbReference type="SUPFAM" id="SSF53383">
    <property type="entry name" value="PLP-dependent transferases"/>
    <property type="match status" value="1"/>
</dbReference>
<protein>
    <recommendedName>
        <fullName evidence="1">O-phospho-L-seryl-tRNA:Cys-tRNA synthase 1</fullName>
        <ecNumber evidence="1">2.5.1.73</ecNumber>
    </recommendedName>
    <alternativeName>
        <fullName evidence="1">Sep-tRNA:Cys-tRNA synthase 1</fullName>
        <shortName evidence="1">SepCysS 1</shortName>
    </alternativeName>
</protein>
<evidence type="ECO:0000255" key="1">
    <source>
        <dbReference type="HAMAP-Rule" id="MF_01675"/>
    </source>
</evidence>
<organism>
    <name type="scientific">Methanococcoides burtonii (strain DSM 6242 / NBRC 107633 / OCM 468 / ACE-M)</name>
    <dbReference type="NCBI Taxonomy" id="259564"/>
    <lineage>
        <taxon>Archaea</taxon>
        <taxon>Methanobacteriati</taxon>
        <taxon>Methanobacteriota</taxon>
        <taxon>Stenosarchaea group</taxon>
        <taxon>Methanomicrobia</taxon>
        <taxon>Methanosarcinales</taxon>
        <taxon>Methanosarcinaceae</taxon>
        <taxon>Methanococcoides</taxon>
    </lineage>
</organism>
<proteinExistence type="inferred from homology"/>
<sequence>MDEQMNKKYLANKLFETQFALEDLREIVRQSLPTGMSNDQSEHYDEIVSGLGGLLEDLGKKNGQTQPVKIVGDLMCRTREEEFINIQPIQAGGRLTPEARKAVIAYGDGYSTCDNCRKPFRLDKIEKPSISTFHTDLAEFVGMDQARVVPGARRGFQAVASSIIEKGDTVVVSTFAHYTEFLAVEGAGGIVREAPVNEHNILTAESVAHKIDEVKRETGKLPALIMIDHFDYLFCNEHDIYGIGKVAQEYGIPFLYNGAYTVGIMPVNGQKIGADFVVGSGHKSMASAAPSGVLATTEEWADKIFRTTQMVGDVTGRKFGIKEVEFLGCTLMGAPLLSMMASFPHVKERTKHWDEEVKKSNYFINEFLRIEGNEVLSEFPRKHALSKVDTTGSFDKVAKTHKRKGYFFSDELKKRGIAGEFPGATRSWKMSTYGLSWDQIHYLSNSFIEIADKYDININ</sequence>
<reference key="1">
    <citation type="journal article" date="2009" name="ISME J.">
        <title>The genome sequence of the psychrophilic archaeon, Methanococcoides burtonii: the role of genome evolution in cold adaptation.</title>
        <authorList>
            <person name="Allen M.A."/>
            <person name="Lauro F.M."/>
            <person name="Williams T.J."/>
            <person name="Burg D."/>
            <person name="Siddiqui K.S."/>
            <person name="De Francisci D."/>
            <person name="Chong K.W."/>
            <person name="Pilak O."/>
            <person name="Chew H.H."/>
            <person name="De Maere M.Z."/>
            <person name="Ting L."/>
            <person name="Katrib M."/>
            <person name="Ng C."/>
            <person name="Sowers K.R."/>
            <person name="Galperin M.Y."/>
            <person name="Anderson I.J."/>
            <person name="Ivanova N."/>
            <person name="Dalin E."/>
            <person name="Martinez M."/>
            <person name="Lapidus A."/>
            <person name="Hauser L."/>
            <person name="Land M."/>
            <person name="Thomas T."/>
            <person name="Cavicchioli R."/>
        </authorList>
    </citation>
    <scope>NUCLEOTIDE SEQUENCE [LARGE SCALE GENOMIC DNA]</scope>
    <source>
        <strain>DSM 6242 / NBRC 107633 / OCM 468 / ACE-M</strain>
    </source>
</reference>
<gene>
    <name type="ordered locus">Mbur_0796</name>
</gene>
<feature type="chain" id="PRO_0000359445" description="O-phospho-L-seryl-tRNA:Cys-tRNA synthase 1">
    <location>
        <begin position="1"/>
        <end position="459"/>
    </location>
</feature>
<feature type="binding site" evidence="1">
    <location>
        <begin position="152"/>
        <end position="153"/>
    </location>
    <ligand>
        <name>pyridoxal 5'-phosphate</name>
        <dbReference type="ChEBI" id="CHEBI:597326"/>
    </ligand>
</feature>
<feature type="binding site" evidence="1">
    <location>
        <position position="257"/>
    </location>
    <ligand>
        <name>pyridoxal 5'-phosphate</name>
        <dbReference type="ChEBI" id="CHEBI:597326"/>
    </ligand>
</feature>
<feature type="binding site" evidence="1">
    <location>
        <begin position="280"/>
        <end position="282"/>
    </location>
    <ligand>
        <name>pyridoxal 5'-phosphate</name>
        <dbReference type="ChEBI" id="CHEBI:597326"/>
    </ligand>
</feature>
<feature type="modified residue" description="N6-(pyridoxal phosphate)lysine" evidence="1">
    <location>
        <position position="283"/>
    </location>
</feature>